<name>YPA3_ASCIM</name>
<keyword id="KW-0496">Mitochondrion</keyword>
<keyword id="KW-0614">Plasmid</keyword>
<sequence>MAYFVPSIVFNGLKSNDKEPLGNFDSSMSPSSYDITVWISSLSKKIASVFINVSLSVKVVTLPKPIDLTLPVGNLIFAFTTKKGWVKLSL</sequence>
<evidence type="ECO:0000305" key="1"/>
<proteinExistence type="predicted"/>
<dbReference type="EMBL" id="X15982">
    <property type="protein sequence ID" value="CAA34108.1"/>
    <property type="molecule type" value="Genomic_DNA"/>
</dbReference>
<dbReference type="PIR" id="S05365">
    <property type="entry name" value="S05365"/>
</dbReference>
<dbReference type="GO" id="GO:0005739">
    <property type="term" value="C:mitochondrion"/>
    <property type="evidence" value="ECO:0007669"/>
    <property type="project" value="UniProtKB-SubCell"/>
</dbReference>
<reference key="1">
    <citation type="journal article" date="1989" name="Mol. Gen. Genet.">
        <title>In organello replication and viral affinity of linear, extrachromosomal DNA of the ascomycete Ascobolus immersus.</title>
        <authorList>
            <person name="Kempken F."/>
            <person name="Meinhardt F."/>
            <person name="Esser K."/>
        </authorList>
    </citation>
    <scope>NUCLEOTIDE SEQUENCE [GENOMIC DNA]</scope>
    <source>
        <strain>2/I</strain>
    </source>
</reference>
<organism>
    <name type="scientific">Ascobolus immersus</name>
    <dbReference type="NCBI Taxonomy" id="5191"/>
    <lineage>
        <taxon>Eukaryota</taxon>
        <taxon>Fungi</taxon>
        <taxon>Dikarya</taxon>
        <taxon>Ascomycota</taxon>
        <taxon>Pezizomycotina</taxon>
        <taxon>Pezizomycetes</taxon>
        <taxon>Pezizales</taxon>
        <taxon>Ascobolaceae</taxon>
        <taxon>Ascobolus</taxon>
    </lineage>
</organism>
<comment type="subcellular location">
    <subcellularLocation>
        <location evidence="1">Mitochondrion</location>
    </subcellularLocation>
</comment>
<feature type="chain" id="PRO_0000196887" description="Uncharacterized mitochondrial protein ORF3">
    <location>
        <begin position="1"/>
        <end position="90"/>
    </location>
</feature>
<geneLocation type="mitochondrion"/>
<geneLocation type="plasmid">
    <name>pAI2</name>
</geneLocation>
<protein>
    <recommendedName>
        <fullName>Uncharacterized mitochondrial protein ORF3</fullName>
    </recommendedName>
</protein>
<accession>P22376</accession>